<name>HUTH_STAA9</name>
<gene>
    <name evidence="1" type="primary">hutH</name>
    <name type="ordered locus">SaurJH9_0008</name>
</gene>
<dbReference type="EC" id="4.3.1.3" evidence="1"/>
<dbReference type="EMBL" id="CP000703">
    <property type="protein sequence ID" value="ABQ47822.1"/>
    <property type="molecule type" value="Genomic_DNA"/>
</dbReference>
<dbReference type="RefSeq" id="WP_000177465.1">
    <property type="nucleotide sequence ID" value="NC_009487.1"/>
</dbReference>
<dbReference type="SMR" id="A5INP9"/>
<dbReference type="KEGG" id="saj:SaurJH9_0008"/>
<dbReference type="HOGENOM" id="CLU_014801_4_0_9"/>
<dbReference type="UniPathway" id="UPA00379">
    <property type="reaction ID" value="UER00549"/>
</dbReference>
<dbReference type="GO" id="GO:0005737">
    <property type="term" value="C:cytoplasm"/>
    <property type="evidence" value="ECO:0007669"/>
    <property type="project" value="UniProtKB-SubCell"/>
</dbReference>
<dbReference type="GO" id="GO:0004397">
    <property type="term" value="F:histidine ammonia-lyase activity"/>
    <property type="evidence" value="ECO:0007669"/>
    <property type="project" value="UniProtKB-UniRule"/>
</dbReference>
<dbReference type="GO" id="GO:0019556">
    <property type="term" value="P:L-histidine catabolic process to glutamate and formamide"/>
    <property type="evidence" value="ECO:0007669"/>
    <property type="project" value="UniProtKB-UniPathway"/>
</dbReference>
<dbReference type="GO" id="GO:0019557">
    <property type="term" value="P:L-histidine catabolic process to glutamate and formate"/>
    <property type="evidence" value="ECO:0007669"/>
    <property type="project" value="UniProtKB-UniPathway"/>
</dbReference>
<dbReference type="CDD" id="cd00332">
    <property type="entry name" value="PAL-HAL"/>
    <property type="match status" value="1"/>
</dbReference>
<dbReference type="FunFam" id="1.10.275.10:FF:000008">
    <property type="entry name" value="Histidine ammonia-lyase"/>
    <property type="match status" value="1"/>
</dbReference>
<dbReference type="FunFam" id="1.20.200.10:FF:000003">
    <property type="entry name" value="Histidine ammonia-lyase"/>
    <property type="match status" value="1"/>
</dbReference>
<dbReference type="Gene3D" id="1.20.200.10">
    <property type="entry name" value="Fumarase/aspartase (Central domain)"/>
    <property type="match status" value="1"/>
</dbReference>
<dbReference type="Gene3D" id="1.10.275.10">
    <property type="entry name" value="Fumarase/aspartase (N-terminal domain)"/>
    <property type="match status" value="1"/>
</dbReference>
<dbReference type="HAMAP" id="MF_00229">
    <property type="entry name" value="His_ammonia_lyase"/>
    <property type="match status" value="1"/>
</dbReference>
<dbReference type="InterPro" id="IPR001106">
    <property type="entry name" value="Aromatic_Lyase"/>
</dbReference>
<dbReference type="InterPro" id="IPR024083">
    <property type="entry name" value="Fumarase/histidase_N"/>
</dbReference>
<dbReference type="InterPro" id="IPR005921">
    <property type="entry name" value="HutH"/>
</dbReference>
<dbReference type="InterPro" id="IPR008948">
    <property type="entry name" value="L-Aspartase-like"/>
</dbReference>
<dbReference type="InterPro" id="IPR022313">
    <property type="entry name" value="Phe/His_NH3-lyase_AS"/>
</dbReference>
<dbReference type="NCBIfam" id="TIGR01225">
    <property type="entry name" value="hutH"/>
    <property type="match status" value="1"/>
</dbReference>
<dbReference type="NCBIfam" id="NF006871">
    <property type="entry name" value="PRK09367.1"/>
    <property type="match status" value="1"/>
</dbReference>
<dbReference type="PANTHER" id="PTHR10362">
    <property type="entry name" value="HISTIDINE AMMONIA-LYASE"/>
    <property type="match status" value="1"/>
</dbReference>
<dbReference type="Pfam" id="PF00221">
    <property type="entry name" value="Lyase_aromatic"/>
    <property type="match status" value="1"/>
</dbReference>
<dbReference type="SUPFAM" id="SSF48557">
    <property type="entry name" value="L-aspartase-like"/>
    <property type="match status" value="1"/>
</dbReference>
<dbReference type="PROSITE" id="PS00488">
    <property type="entry name" value="PAL_HISTIDASE"/>
    <property type="match status" value="1"/>
</dbReference>
<evidence type="ECO:0000255" key="1">
    <source>
        <dbReference type="HAMAP-Rule" id="MF_00229"/>
    </source>
</evidence>
<protein>
    <recommendedName>
        <fullName evidence="1">Histidine ammonia-lyase</fullName>
        <shortName evidence="1">Histidase</shortName>
        <ecNumber evidence="1">4.3.1.3</ecNumber>
    </recommendedName>
</protein>
<proteinExistence type="inferred from homology"/>
<comment type="catalytic activity">
    <reaction evidence="1">
        <text>L-histidine = trans-urocanate + NH4(+)</text>
        <dbReference type="Rhea" id="RHEA:21232"/>
        <dbReference type="ChEBI" id="CHEBI:17771"/>
        <dbReference type="ChEBI" id="CHEBI:28938"/>
        <dbReference type="ChEBI" id="CHEBI:57595"/>
        <dbReference type="EC" id="4.3.1.3"/>
    </reaction>
</comment>
<comment type="pathway">
    <text evidence="1">Amino-acid degradation; L-histidine degradation into L-glutamate; N-formimidoyl-L-glutamate from L-histidine: step 1/3.</text>
</comment>
<comment type="subcellular location">
    <subcellularLocation>
        <location evidence="1">Cytoplasm</location>
    </subcellularLocation>
</comment>
<comment type="PTM">
    <text evidence="1">Contains an active site 4-methylidene-imidazol-5-one (MIO), which is formed autocatalytically by cyclization and dehydration of residues Ala-Ser-Gly.</text>
</comment>
<comment type="similarity">
    <text evidence="1">Belongs to the PAL/histidase family.</text>
</comment>
<organism>
    <name type="scientific">Staphylococcus aureus (strain JH9)</name>
    <dbReference type="NCBI Taxonomy" id="359786"/>
    <lineage>
        <taxon>Bacteria</taxon>
        <taxon>Bacillati</taxon>
        <taxon>Bacillota</taxon>
        <taxon>Bacilli</taxon>
        <taxon>Bacillales</taxon>
        <taxon>Staphylococcaceae</taxon>
        <taxon>Staphylococcus</taxon>
    </lineage>
</organism>
<keyword id="KW-0963">Cytoplasm</keyword>
<keyword id="KW-0369">Histidine metabolism</keyword>
<keyword id="KW-0456">Lyase</keyword>
<accession>A5INP9</accession>
<feature type="chain" id="PRO_1000078233" description="Histidine ammonia-lyase">
    <location>
        <begin position="1"/>
        <end position="504"/>
    </location>
</feature>
<feature type="modified residue" description="2,3-didehydroalanine (Ser)" evidence="1">
    <location>
        <position position="143"/>
    </location>
</feature>
<feature type="cross-link" description="5-imidazolinone (Ala-Gly)" evidence="1">
    <location>
        <begin position="142"/>
        <end position="144"/>
    </location>
</feature>
<sequence>MTLYLDGETLTIEDIKSFLQQQSKIEIIDDALERVKKSRAVVERIIENEETVYGITTGFGLFSDVRIDPTQYNELQVNLIRSHACGLGEPFSKEVALVMMILRLNTLLKGHSGATLELVRQLQFFINERIIPIIPQQGSLGASGDLAPLSHLALALIGEGKVLYRGEEKDSDDVLRELNRQPLNLQAKEGLALINGTQAMTAQGVISYIEAEDLGYQSEWIAALTHQSLNGIIDAYRHDVHSVRNFQEQINVAARMRDWLEGSTLTTRQAEIRVQDAYTLRCIPQIHGASFQVFNYVKQQLEFEMNAANDNPLIFEEANETFVISGGNFHGQPIAFALDHLKLGVSELANVSERRLERLVNPQLNGDLPAFLSPEPGLQSGAMIMQYAAASLVSENKTLAHPASVDSITSSANQEDHVSMGTTAARHGYQIIENARRVLAIECVIALQAAELKGVEGLSPKTRRKYEEFRSIVPSITHDRQFHKDIEAVAQYLKQSIYQTTACH</sequence>
<reference key="1">
    <citation type="submission" date="2007-05" db="EMBL/GenBank/DDBJ databases">
        <title>Complete sequence of chromosome of Staphylococcus aureus subsp. aureus JH9.</title>
        <authorList>
            <consortium name="US DOE Joint Genome Institute"/>
            <person name="Copeland A."/>
            <person name="Lucas S."/>
            <person name="Lapidus A."/>
            <person name="Barry K."/>
            <person name="Detter J.C."/>
            <person name="Glavina del Rio T."/>
            <person name="Hammon N."/>
            <person name="Israni S."/>
            <person name="Pitluck S."/>
            <person name="Chain P."/>
            <person name="Malfatti S."/>
            <person name="Shin M."/>
            <person name="Vergez L."/>
            <person name="Schmutz J."/>
            <person name="Larimer F."/>
            <person name="Land M."/>
            <person name="Hauser L."/>
            <person name="Kyrpides N."/>
            <person name="Kim E."/>
            <person name="Tomasz A."/>
            <person name="Richardson P."/>
        </authorList>
    </citation>
    <scope>NUCLEOTIDE SEQUENCE [LARGE SCALE GENOMIC DNA]</scope>
    <source>
        <strain>JH9</strain>
    </source>
</reference>